<reference key="1">
    <citation type="submission" date="2007-10" db="EMBL/GenBank/DDBJ databases">
        <title>Brucella canis ATCC 23365 whole genome shotgun sequencing project.</title>
        <authorList>
            <person name="Setubal J.C."/>
            <person name="Bowns C."/>
            <person name="Boyle S."/>
            <person name="Crasta O.R."/>
            <person name="Czar M.J."/>
            <person name="Dharmanolla C."/>
            <person name="Gillespie J.J."/>
            <person name="Kenyon R.W."/>
            <person name="Lu J."/>
            <person name="Mane S."/>
            <person name="Mohapatra S."/>
            <person name="Nagrani S."/>
            <person name="Purkayastha A."/>
            <person name="Rajasimha H.K."/>
            <person name="Shallom J.M."/>
            <person name="Shallom S."/>
            <person name="Shukla M."/>
            <person name="Snyder E.E."/>
            <person name="Sobral B.W."/>
            <person name="Wattam A.R."/>
            <person name="Will R."/>
            <person name="Williams K."/>
            <person name="Yoo H."/>
            <person name="Bruce D."/>
            <person name="Detter C."/>
            <person name="Munk C."/>
            <person name="Brettin T.S."/>
        </authorList>
    </citation>
    <scope>NUCLEOTIDE SEQUENCE [LARGE SCALE GENOMIC DNA]</scope>
    <source>
        <strain>ATCC 23365 / NCTC 10854 / RM-666</strain>
    </source>
</reference>
<name>RL17_BRUC2</name>
<feature type="chain" id="PRO_1000087160" description="Large ribosomal subunit protein bL17">
    <location>
        <begin position="1"/>
        <end position="142"/>
    </location>
</feature>
<dbReference type="EMBL" id="CP000872">
    <property type="protein sequence ID" value="ABX62279.1"/>
    <property type="molecule type" value="Genomic_DNA"/>
</dbReference>
<dbReference type="RefSeq" id="WP_004688454.1">
    <property type="nucleotide sequence ID" value="NC_010103.1"/>
</dbReference>
<dbReference type="SMR" id="A9M5M4"/>
<dbReference type="GeneID" id="97533549"/>
<dbReference type="KEGG" id="bcs:BCAN_A1230"/>
<dbReference type="HOGENOM" id="CLU_074407_2_0_5"/>
<dbReference type="PhylomeDB" id="A9M5M4"/>
<dbReference type="Proteomes" id="UP000001385">
    <property type="component" value="Chromosome I"/>
</dbReference>
<dbReference type="GO" id="GO:0022625">
    <property type="term" value="C:cytosolic large ribosomal subunit"/>
    <property type="evidence" value="ECO:0007669"/>
    <property type="project" value="TreeGrafter"/>
</dbReference>
<dbReference type="GO" id="GO:0003735">
    <property type="term" value="F:structural constituent of ribosome"/>
    <property type="evidence" value="ECO:0007669"/>
    <property type="project" value="InterPro"/>
</dbReference>
<dbReference type="GO" id="GO:0006412">
    <property type="term" value="P:translation"/>
    <property type="evidence" value="ECO:0007669"/>
    <property type="project" value="UniProtKB-UniRule"/>
</dbReference>
<dbReference type="FunFam" id="3.90.1030.10:FF:000001">
    <property type="entry name" value="50S ribosomal protein L17"/>
    <property type="match status" value="1"/>
</dbReference>
<dbReference type="Gene3D" id="3.90.1030.10">
    <property type="entry name" value="Ribosomal protein L17"/>
    <property type="match status" value="1"/>
</dbReference>
<dbReference type="HAMAP" id="MF_01368">
    <property type="entry name" value="Ribosomal_bL17"/>
    <property type="match status" value="1"/>
</dbReference>
<dbReference type="InterPro" id="IPR000456">
    <property type="entry name" value="Ribosomal_bL17"/>
</dbReference>
<dbReference type="InterPro" id="IPR047859">
    <property type="entry name" value="Ribosomal_bL17_CS"/>
</dbReference>
<dbReference type="InterPro" id="IPR036373">
    <property type="entry name" value="Ribosomal_bL17_sf"/>
</dbReference>
<dbReference type="NCBIfam" id="TIGR00059">
    <property type="entry name" value="L17"/>
    <property type="match status" value="1"/>
</dbReference>
<dbReference type="PANTHER" id="PTHR14413:SF16">
    <property type="entry name" value="LARGE RIBOSOMAL SUBUNIT PROTEIN BL17M"/>
    <property type="match status" value="1"/>
</dbReference>
<dbReference type="PANTHER" id="PTHR14413">
    <property type="entry name" value="RIBOSOMAL PROTEIN L17"/>
    <property type="match status" value="1"/>
</dbReference>
<dbReference type="Pfam" id="PF01196">
    <property type="entry name" value="Ribosomal_L17"/>
    <property type="match status" value="1"/>
</dbReference>
<dbReference type="SUPFAM" id="SSF64263">
    <property type="entry name" value="Prokaryotic ribosomal protein L17"/>
    <property type="match status" value="1"/>
</dbReference>
<dbReference type="PROSITE" id="PS01167">
    <property type="entry name" value="RIBOSOMAL_L17"/>
    <property type="match status" value="1"/>
</dbReference>
<proteinExistence type="inferred from homology"/>
<sequence>MRHGNGYRKLNRTASHRKAMFANMAASLIEHEQIVTTLPKAKEIRPIVEKLVTLGKRGDLHARRQAISAIRDVKLVAKLFDTLAARYATRNGGYIRIMKAGFRAGDNAPLAVVEFVERDVDAKGKADRARVEAEAAAEADAA</sequence>
<evidence type="ECO:0000255" key="1">
    <source>
        <dbReference type="HAMAP-Rule" id="MF_01368"/>
    </source>
</evidence>
<evidence type="ECO:0000305" key="2"/>
<accession>A9M5M4</accession>
<gene>
    <name evidence="1" type="primary">rplQ</name>
    <name type="ordered locus">BCAN_A1230</name>
</gene>
<comment type="subunit">
    <text evidence="1">Part of the 50S ribosomal subunit. Contacts protein L32.</text>
</comment>
<comment type="similarity">
    <text evidence="1">Belongs to the bacterial ribosomal protein bL17 family.</text>
</comment>
<organism>
    <name type="scientific">Brucella canis (strain ATCC 23365 / NCTC 10854 / RM-666)</name>
    <dbReference type="NCBI Taxonomy" id="483179"/>
    <lineage>
        <taxon>Bacteria</taxon>
        <taxon>Pseudomonadati</taxon>
        <taxon>Pseudomonadota</taxon>
        <taxon>Alphaproteobacteria</taxon>
        <taxon>Hyphomicrobiales</taxon>
        <taxon>Brucellaceae</taxon>
        <taxon>Brucella/Ochrobactrum group</taxon>
        <taxon>Brucella</taxon>
    </lineage>
</organism>
<protein>
    <recommendedName>
        <fullName evidence="1">Large ribosomal subunit protein bL17</fullName>
    </recommendedName>
    <alternativeName>
        <fullName evidence="2">50S ribosomal protein L17</fullName>
    </alternativeName>
</protein>
<keyword id="KW-1185">Reference proteome</keyword>
<keyword id="KW-0687">Ribonucleoprotein</keyword>
<keyword id="KW-0689">Ribosomal protein</keyword>